<evidence type="ECO:0000250" key="1"/>
<evidence type="ECO:0000255" key="2"/>
<evidence type="ECO:0000255" key="3">
    <source>
        <dbReference type="PROSITE-ProRule" id="PRU00175"/>
    </source>
</evidence>
<evidence type="ECO:0000255" key="4">
    <source>
        <dbReference type="PROSITE-ProRule" id="PRU00723"/>
    </source>
</evidence>
<evidence type="ECO:0000256" key="5">
    <source>
        <dbReference type="SAM" id="MobiDB-lite"/>
    </source>
</evidence>
<evidence type="ECO:0000305" key="6"/>
<evidence type="ECO:0000312" key="7">
    <source>
        <dbReference type="EMBL" id="AAH74368.1"/>
    </source>
</evidence>
<reference evidence="7" key="1">
    <citation type="submission" date="2004-06" db="EMBL/GenBank/DDBJ databases">
        <authorList>
            <consortium name="NIH - Xenopus Gene Collection (XGC) project"/>
        </authorList>
    </citation>
    <scope>NUCLEOTIDE SEQUENCE [LARGE SCALE MRNA]</scope>
    <source>
        <tissue evidence="7">Brain</tissue>
    </source>
</reference>
<comment type="function">
    <text evidence="1">E3 ubiquitin ligase catalyzing the covalent attachment of ubiquitin moieties onto substrate proteins.</text>
</comment>
<comment type="catalytic activity">
    <reaction>
        <text>S-ubiquitinyl-[E2 ubiquitin-conjugating enzyme]-L-cysteine + [acceptor protein]-L-lysine = [E2 ubiquitin-conjugating enzyme]-L-cysteine + N(6)-ubiquitinyl-[acceptor protein]-L-lysine.</text>
        <dbReference type="EC" id="2.3.2.27"/>
    </reaction>
</comment>
<comment type="pathway">
    <text>Protein modification; protein ubiquitination.</text>
</comment>
<keyword id="KW-0479">Metal-binding</keyword>
<keyword id="KW-1185">Reference proteome</keyword>
<keyword id="KW-0677">Repeat</keyword>
<keyword id="KW-0808">Transferase</keyword>
<keyword id="KW-0833">Ubl conjugation pathway</keyword>
<keyword id="KW-0862">Zinc</keyword>
<keyword id="KW-0863">Zinc-finger</keyword>
<gene>
    <name type="primary">mkrn1</name>
</gene>
<organism>
    <name type="scientific">Xenopus laevis</name>
    <name type="common">African clawed frog</name>
    <dbReference type="NCBI Taxonomy" id="8355"/>
    <lineage>
        <taxon>Eukaryota</taxon>
        <taxon>Metazoa</taxon>
        <taxon>Chordata</taxon>
        <taxon>Craniata</taxon>
        <taxon>Vertebrata</taxon>
        <taxon>Euteleostomi</taxon>
        <taxon>Amphibia</taxon>
        <taxon>Batrachia</taxon>
        <taxon>Anura</taxon>
        <taxon>Pipoidea</taxon>
        <taxon>Pipidae</taxon>
        <taxon>Xenopodinae</taxon>
        <taxon>Xenopus</taxon>
        <taxon>Xenopus</taxon>
    </lineage>
</organism>
<feature type="chain" id="PRO_0000361047" description="Probable E3 ubiquitin-protein ligase makorin-1">
    <location>
        <begin position="1"/>
        <end position="408"/>
    </location>
</feature>
<feature type="zinc finger region" description="C3H1-type 1" evidence="4">
    <location>
        <begin position="34"/>
        <end position="61"/>
    </location>
</feature>
<feature type="zinc finger region" description="C3H1-type 2" evidence="4">
    <location>
        <begin position="63"/>
        <end position="90"/>
    </location>
</feature>
<feature type="zinc finger region" description="C3H1-type 3" evidence="4">
    <location>
        <begin position="174"/>
        <end position="201"/>
    </location>
</feature>
<feature type="zinc finger region" description="RING-type" evidence="3">
    <location>
        <begin position="247"/>
        <end position="301"/>
    </location>
</feature>
<feature type="zinc finger region" description="C3H1-type 4" evidence="4">
    <location>
        <begin position="330"/>
        <end position="359"/>
    </location>
</feature>
<feature type="region of interest" description="Disordered" evidence="5">
    <location>
        <begin position="90"/>
        <end position="114"/>
    </location>
</feature>
<feature type="region of interest" description="Disordered" evidence="5">
    <location>
        <begin position="154"/>
        <end position="173"/>
    </location>
</feature>
<feature type="region of interest" description="Makorin-type Cys-His" evidence="2">
    <location>
        <begin position="202"/>
        <end position="229"/>
    </location>
</feature>
<feature type="region of interest" description="Disordered" evidence="5">
    <location>
        <begin position="363"/>
        <end position="408"/>
    </location>
</feature>
<feature type="compositionally biased region" description="Basic and acidic residues" evidence="5">
    <location>
        <begin position="162"/>
        <end position="173"/>
    </location>
</feature>
<dbReference type="EC" id="2.3.2.27"/>
<dbReference type="EMBL" id="BC074368">
    <property type="protein sequence ID" value="AAH74368.1"/>
    <property type="molecule type" value="mRNA"/>
</dbReference>
<dbReference type="RefSeq" id="NP_001086242.1">
    <property type="nucleotide sequence ID" value="NM_001092773.1"/>
</dbReference>
<dbReference type="DNASU" id="444671"/>
<dbReference type="GeneID" id="444671"/>
<dbReference type="KEGG" id="xla:444671"/>
<dbReference type="AGR" id="Xenbase:XB-GENE-959147"/>
<dbReference type="CTD" id="444671"/>
<dbReference type="Xenbase" id="XB-GENE-959147">
    <property type="gene designation" value="mkrn1.S"/>
</dbReference>
<dbReference type="OrthoDB" id="411372at2759"/>
<dbReference type="UniPathway" id="UPA00143"/>
<dbReference type="Proteomes" id="UP000186698">
    <property type="component" value="Chromosome 3S"/>
</dbReference>
<dbReference type="Bgee" id="444671">
    <property type="expression patterns" value="Expressed in blastula and 19 other cell types or tissues"/>
</dbReference>
<dbReference type="GO" id="GO:0061630">
    <property type="term" value="F:ubiquitin protein ligase activity"/>
    <property type="evidence" value="ECO:0000318"/>
    <property type="project" value="GO_Central"/>
</dbReference>
<dbReference type="GO" id="GO:0008270">
    <property type="term" value="F:zinc ion binding"/>
    <property type="evidence" value="ECO:0007669"/>
    <property type="project" value="UniProtKB-KW"/>
</dbReference>
<dbReference type="GO" id="GO:0000209">
    <property type="term" value="P:protein polyubiquitination"/>
    <property type="evidence" value="ECO:0007669"/>
    <property type="project" value="InterPro"/>
</dbReference>
<dbReference type="GO" id="GO:0016567">
    <property type="term" value="P:protein ubiquitination"/>
    <property type="evidence" value="ECO:0000318"/>
    <property type="project" value="GO_Central"/>
</dbReference>
<dbReference type="CDD" id="cd16730">
    <property type="entry name" value="RING-HC_MKRN1_3"/>
    <property type="match status" value="1"/>
</dbReference>
<dbReference type="FunFam" id="3.30.40.10:FF:000117">
    <property type="entry name" value="Probable E3 ubiquitin-protein ligase makorin-1"/>
    <property type="match status" value="1"/>
</dbReference>
<dbReference type="Gene3D" id="2.30.30.1190">
    <property type="match status" value="1"/>
</dbReference>
<dbReference type="Gene3D" id="4.10.1000.10">
    <property type="entry name" value="Zinc finger, CCCH-type"/>
    <property type="match status" value="1"/>
</dbReference>
<dbReference type="Gene3D" id="3.30.40.10">
    <property type="entry name" value="Zinc/RING finger domain, C3HC4 (zinc finger)"/>
    <property type="match status" value="1"/>
</dbReference>
<dbReference type="InterPro" id="IPR045072">
    <property type="entry name" value="MKRN-like"/>
</dbReference>
<dbReference type="InterPro" id="IPR041367">
    <property type="entry name" value="Znf-CCCH_4"/>
</dbReference>
<dbReference type="InterPro" id="IPR018957">
    <property type="entry name" value="Znf_C3HC4_RING-type"/>
</dbReference>
<dbReference type="InterPro" id="IPR000571">
    <property type="entry name" value="Znf_CCCH"/>
</dbReference>
<dbReference type="InterPro" id="IPR036855">
    <property type="entry name" value="Znf_CCCH_sf"/>
</dbReference>
<dbReference type="InterPro" id="IPR001841">
    <property type="entry name" value="Znf_RING"/>
</dbReference>
<dbReference type="InterPro" id="IPR013083">
    <property type="entry name" value="Znf_RING/FYVE/PHD"/>
</dbReference>
<dbReference type="InterPro" id="IPR017907">
    <property type="entry name" value="Znf_RING_CS"/>
</dbReference>
<dbReference type="PANTHER" id="PTHR11224:SF37">
    <property type="entry name" value="E3 UBIQUITIN-PROTEIN LIGASE MAKORIN-1"/>
    <property type="match status" value="1"/>
</dbReference>
<dbReference type="PANTHER" id="PTHR11224">
    <property type="entry name" value="MAKORIN-RELATED"/>
    <property type="match status" value="1"/>
</dbReference>
<dbReference type="Pfam" id="PF00097">
    <property type="entry name" value="zf-C3HC4"/>
    <property type="match status" value="1"/>
</dbReference>
<dbReference type="Pfam" id="PF00642">
    <property type="entry name" value="zf-CCCH"/>
    <property type="match status" value="1"/>
</dbReference>
<dbReference type="Pfam" id="PF14608">
    <property type="entry name" value="zf-CCCH_2"/>
    <property type="match status" value="2"/>
</dbReference>
<dbReference type="Pfam" id="PF18044">
    <property type="entry name" value="zf-CCCH_4"/>
    <property type="match status" value="1"/>
</dbReference>
<dbReference type="SMART" id="SM00184">
    <property type="entry name" value="RING"/>
    <property type="match status" value="1"/>
</dbReference>
<dbReference type="SMART" id="SM00356">
    <property type="entry name" value="ZnF_C3H1"/>
    <property type="match status" value="4"/>
</dbReference>
<dbReference type="SUPFAM" id="SSF90229">
    <property type="entry name" value="CCCH zinc finger"/>
    <property type="match status" value="3"/>
</dbReference>
<dbReference type="SUPFAM" id="SSF57850">
    <property type="entry name" value="RING/U-box"/>
    <property type="match status" value="1"/>
</dbReference>
<dbReference type="PROSITE" id="PS50103">
    <property type="entry name" value="ZF_C3H1"/>
    <property type="match status" value="4"/>
</dbReference>
<dbReference type="PROSITE" id="PS00518">
    <property type="entry name" value="ZF_RING_1"/>
    <property type="match status" value="1"/>
</dbReference>
<dbReference type="PROSITE" id="PS50089">
    <property type="entry name" value="ZF_RING_2"/>
    <property type="match status" value="1"/>
</dbReference>
<name>MKRN1_XENLA</name>
<protein>
    <recommendedName>
        <fullName>Probable E3 ubiquitin-protein ligase makorin-1</fullName>
        <ecNumber>2.3.2.27</ecNumber>
    </recommendedName>
    <alternativeName>
        <fullName evidence="6">RING-type E3 ubiquitin transferase makorin-1</fullName>
    </alternativeName>
</protein>
<accession>Q6GLT5</accession>
<proteinExistence type="evidence at transcript level"/>
<sequence>MAEAAAAPALLTSAASAGKAPLPAFPENPPVGVWTRHVTCRYFIHGVCKEGINCRYSHDLATSRSAMICRYFQRGCCAYGDRCRYEHNKPLQEDPTGDTCTAPSESLPEPSGNINSKAAELAASELASGGPRAQDWVNAVEFVPGQLYSGRAPEAYTQGTVKPDEGREEPADPELKKQLCPYAAMGECRYGENCVYLHGDPCDMCGLQVLHPVDTCQRSQHIKSCIEAHEKDMELSFAVQRSKDIVCGICMEVVYEKTNPSERRFGILSNCSHSYCLKCIRKWRSAKQFESKIIKSCPECRITSNFIIPSEYWVEEKEEKHKLIHKYKEAMSSKSCRYFDEGRGTCPFGGNCFYRHAYPDGRIEEPQPRQKSGMSSRYRIPSPSAGIDFGSLTSERAETRLRTRKTKL</sequence>